<protein>
    <recommendedName>
        <fullName evidence="1">Glutamate--tRNA ligase 1</fullName>
        <ecNumber evidence="1">6.1.1.17</ecNumber>
    </recommendedName>
    <alternativeName>
        <fullName evidence="1">Glutamyl-tRNA synthetase 1</fullName>
        <shortName evidence="1">GluRS 1</shortName>
    </alternativeName>
</protein>
<accession>Q5LWB2</accession>
<name>SYE1_RUEPO</name>
<sequence>MSMTTTRFAPSPTGYIHVGNLRTALMNYLIARKAGGTFILRIDDTDPERSKEEYVDAIKQDLDWLGLHWDRVERQSERLDRYAEAADKLRAMGRFYEAFETPTELDLKRKKQLNMGKPPVYDRAALALSEGEKEALRAERGNGVWRFKLDQERIEWTDGILGDISIDAASVSDPVLIRGDGQVLYTLASVVDDTDMGVTDVVRGSDHVTNTATQIQIMAALGFEHPRFAHHSLLTGPQGEALSKRLGTLALRDLREQGVQPMALLSLMARLGSSDPVELRSDMAELIEGFDVTRFGAAPTKFDVQDLFPLTGRYLQALPLEAVAKDVAAAGVPEDLAAPFWSMARENITTLNDLAGWWALCRDGAEPLIADEDRAFVTEAMALLPEGPLDADSWGAWTQAVKEATGRKGKGLFMPLRKAVTGMERGPEMATLLPLMQVIRARG</sequence>
<reference key="1">
    <citation type="journal article" date="2004" name="Nature">
        <title>Genome sequence of Silicibacter pomeroyi reveals adaptations to the marine environment.</title>
        <authorList>
            <person name="Moran M.A."/>
            <person name="Buchan A."/>
            <person name="Gonzalez J.M."/>
            <person name="Heidelberg J.F."/>
            <person name="Whitman W.B."/>
            <person name="Kiene R.P."/>
            <person name="Henriksen J.R."/>
            <person name="King G.M."/>
            <person name="Belas R."/>
            <person name="Fuqua C."/>
            <person name="Brinkac L.M."/>
            <person name="Lewis M."/>
            <person name="Johri S."/>
            <person name="Weaver B."/>
            <person name="Pai G."/>
            <person name="Eisen J.A."/>
            <person name="Rahe E."/>
            <person name="Sheldon W.M."/>
            <person name="Ye W."/>
            <person name="Miller T.R."/>
            <person name="Carlton J."/>
            <person name="Rasko D.A."/>
            <person name="Paulsen I.T."/>
            <person name="Ren Q."/>
            <person name="Daugherty S.C."/>
            <person name="DeBoy R.T."/>
            <person name="Dodson R.J."/>
            <person name="Durkin A.S."/>
            <person name="Madupu R."/>
            <person name="Nelson W.C."/>
            <person name="Sullivan S.A."/>
            <person name="Rosovitz M.J."/>
            <person name="Haft D.H."/>
            <person name="Selengut J."/>
            <person name="Ward N."/>
        </authorList>
    </citation>
    <scope>NUCLEOTIDE SEQUENCE [LARGE SCALE GENOMIC DNA]</scope>
    <source>
        <strain>ATCC 700808 / DSM 15171 / DSS-3</strain>
    </source>
</reference>
<reference key="2">
    <citation type="journal article" date="2014" name="Stand. Genomic Sci.">
        <title>An updated genome annotation for the model marine bacterium Ruegeria pomeroyi DSS-3.</title>
        <authorList>
            <person name="Rivers A.R."/>
            <person name="Smith C.B."/>
            <person name="Moran M.A."/>
        </authorList>
    </citation>
    <scope>GENOME REANNOTATION</scope>
    <source>
        <strain>ATCC 700808 / DSM 15171 / DSS-3</strain>
    </source>
</reference>
<gene>
    <name evidence="1" type="primary">gltX1</name>
    <name type="synonym">gltX-1</name>
    <name type="ordered locus">SPO0430</name>
</gene>
<evidence type="ECO:0000255" key="1">
    <source>
        <dbReference type="HAMAP-Rule" id="MF_00022"/>
    </source>
</evidence>
<feature type="chain" id="PRO_0000119649" description="Glutamate--tRNA ligase 1">
    <location>
        <begin position="1"/>
        <end position="443"/>
    </location>
</feature>
<feature type="short sequence motif" description="'HIGH' region" evidence="1">
    <location>
        <begin position="10"/>
        <end position="20"/>
    </location>
</feature>
<feature type="short sequence motif" description="'KMSKS' region" evidence="1">
    <location>
        <begin position="241"/>
        <end position="245"/>
    </location>
</feature>
<feature type="binding site" evidence="1">
    <location>
        <position position="244"/>
    </location>
    <ligand>
        <name>ATP</name>
        <dbReference type="ChEBI" id="CHEBI:30616"/>
    </ligand>
</feature>
<keyword id="KW-0030">Aminoacyl-tRNA synthetase</keyword>
<keyword id="KW-0067">ATP-binding</keyword>
<keyword id="KW-0963">Cytoplasm</keyword>
<keyword id="KW-0436">Ligase</keyword>
<keyword id="KW-0547">Nucleotide-binding</keyword>
<keyword id="KW-0648">Protein biosynthesis</keyword>
<keyword id="KW-1185">Reference proteome</keyword>
<proteinExistence type="inferred from homology"/>
<organism>
    <name type="scientific">Ruegeria pomeroyi (strain ATCC 700808 / DSM 15171 / DSS-3)</name>
    <name type="common">Silicibacter pomeroyi</name>
    <dbReference type="NCBI Taxonomy" id="246200"/>
    <lineage>
        <taxon>Bacteria</taxon>
        <taxon>Pseudomonadati</taxon>
        <taxon>Pseudomonadota</taxon>
        <taxon>Alphaproteobacteria</taxon>
        <taxon>Rhodobacterales</taxon>
        <taxon>Roseobacteraceae</taxon>
        <taxon>Ruegeria</taxon>
    </lineage>
</organism>
<dbReference type="EC" id="6.1.1.17" evidence="1"/>
<dbReference type="EMBL" id="CP000031">
    <property type="protein sequence ID" value="AAV93748.1"/>
    <property type="molecule type" value="Genomic_DNA"/>
</dbReference>
<dbReference type="SMR" id="Q5LWB2"/>
<dbReference type="STRING" id="246200.SPO0430"/>
<dbReference type="PaxDb" id="246200-SPO0430"/>
<dbReference type="KEGG" id="sil:SPO0430"/>
<dbReference type="eggNOG" id="COG0008">
    <property type="taxonomic scope" value="Bacteria"/>
</dbReference>
<dbReference type="HOGENOM" id="CLU_015768_6_1_5"/>
<dbReference type="Proteomes" id="UP000001023">
    <property type="component" value="Chromosome"/>
</dbReference>
<dbReference type="GO" id="GO:0005829">
    <property type="term" value="C:cytosol"/>
    <property type="evidence" value="ECO:0007669"/>
    <property type="project" value="TreeGrafter"/>
</dbReference>
<dbReference type="GO" id="GO:0005524">
    <property type="term" value="F:ATP binding"/>
    <property type="evidence" value="ECO:0007669"/>
    <property type="project" value="UniProtKB-UniRule"/>
</dbReference>
<dbReference type="GO" id="GO:0004818">
    <property type="term" value="F:glutamate-tRNA ligase activity"/>
    <property type="evidence" value="ECO:0007669"/>
    <property type="project" value="UniProtKB-UniRule"/>
</dbReference>
<dbReference type="GO" id="GO:0000049">
    <property type="term" value="F:tRNA binding"/>
    <property type="evidence" value="ECO:0007669"/>
    <property type="project" value="InterPro"/>
</dbReference>
<dbReference type="GO" id="GO:0008270">
    <property type="term" value="F:zinc ion binding"/>
    <property type="evidence" value="ECO:0007669"/>
    <property type="project" value="InterPro"/>
</dbReference>
<dbReference type="GO" id="GO:0006424">
    <property type="term" value="P:glutamyl-tRNA aminoacylation"/>
    <property type="evidence" value="ECO:0007669"/>
    <property type="project" value="UniProtKB-UniRule"/>
</dbReference>
<dbReference type="CDD" id="cd00808">
    <property type="entry name" value="GluRS_core"/>
    <property type="match status" value="1"/>
</dbReference>
<dbReference type="Gene3D" id="1.10.10.350">
    <property type="match status" value="1"/>
</dbReference>
<dbReference type="Gene3D" id="3.40.50.620">
    <property type="entry name" value="HUPs"/>
    <property type="match status" value="1"/>
</dbReference>
<dbReference type="HAMAP" id="MF_00022">
    <property type="entry name" value="Glu_tRNA_synth_type1"/>
    <property type="match status" value="1"/>
</dbReference>
<dbReference type="InterPro" id="IPR020751">
    <property type="entry name" value="aa-tRNA-synth_I_codon-bd_sub2"/>
</dbReference>
<dbReference type="InterPro" id="IPR001412">
    <property type="entry name" value="aa-tRNA-synth_I_CS"/>
</dbReference>
<dbReference type="InterPro" id="IPR008925">
    <property type="entry name" value="aa_tRNA-synth_I_cd-bd_sf"/>
</dbReference>
<dbReference type="InterPro" id="IPR004527">
    <property type="entry name" value="Glu-tRNA-ligase_bac/mito"/>
</dbReference>
<dbReference type="InterPro" id="IPR000924">
    <property type="entry name" value="Glu/Gln-tRNA-synth"/>
</dbReference>
<dbReference type="InterPro" id="IPR020058">
    <property type="entry name" value="Glu/Gln-tRNA-synth_Ib_cat-dom"/>
</dbReference>
<dbReference type="InterPro" id="IPR049940">
    <property type="entry name" value="GluQ/Sye"/>
</dbReference>
<dbReference type="InterPro" id="IPR033910">
    <property type="entry name" value="GluRS_core"/>
</dbReference>
<dbReference type="InterPro" id="IPR014729">
    <property type="entry name" value="Rossmann-like_a/b/a_fold"/>
</dbReference>
<dbReference type="NCBIfam" id="TIGR00464">
    <property type="entry name" value="gltX_bact"/>
    <property type="match status" value="1"/>
</dbReference>
<dbReference type="PANTHER" id="PTHR43311">
    <property type="entry name" value="GLUTAMATE--TRNA LIGASE"/>
    <property type="match status" value="1"/>
</dbReference>
<dbReference type="PANTHER" id="PTHR43311:SF2">
    <property type="entry name" value="GLUTAMATE--TRNA LIGASE, MITOCHONDRIAL-RELATED"/>
    <property type="match status" value="1"/>
</dbReference>
<dbReference type="Pfam" id="PF00749">
    <property type="entry name" value="tRNA-synt_1c"/>
    <property type="match status" value="1"/>
</dbReference>
<dbReference type="PRINTS" id="PR00987">
    <property type="entry name" value="TRNASYNTHGLU"/>
</dbReference>
<dbReference type="SUPFAM" id="SSF48163">
    <property type="entry name" value="An anticodon-binding domain of class I aminoacyl-tRNA synthetases"/>
    <property type="match status" value="1"/>
</dbReference>
<dbReference type="SUPFAM" id="SSF52374">
    <property type="entry name" value="Nucleotidylyl transferase"/>
    <property type="match status" value="1"/>
</dbReference>
<dbReference type="PROSITE" id="PS00178">
    <property type="entry name" value="AA_TRNA_LIGASE_I"/>
    <property type="match status" value="1"/>
</dbReference>
<comment type="function">
    <text evidence="1">Catalyzes the attachment of glutamate to tRNA(Glu) in a two-step reaction: glutamate is first activated by ATP to form Glu-AMP and then transferred to the acceptor end of tRNA(Glu).</text>
</comment>
<comment type="catalytic activity">
    <reaction evidence="1">
        <text>tRNA(Glu) + L-glutamate + ATP = L-glutamyl-tRNA(Glu) + AMP + diphosphate</text>
        <dbReference type="Rhea" id="RHEA:23540"/>
        <dbReference type="Rhea" id="RHEA-COMP:9663"/>
        <dbReference type="Rhea" id="RHEA-COMP:9680"/>
        <dbReference type="ChEBI" id="CHEBI:29985"/>
        <dbReference type="ChEBI" id="CHEBI:30616"/>
        <dbReference type="ChEBI" id="CHEBI:33019"/>
        <dbReference type="ChEBI" id="CHEBI:78442"/>
        <dbReference type="ChEBI" id="CHEBI:78520"/>
        <dbReference type="ChEBI" id="CHEBI:456215"/>
        <dbReference type="EC" id="6.1.1.17"/>
    </reaction>
</comment>
<comment type="subunit">
    <text evidence="1">Monomer.</text>
</comment>
<comment type="subcellular location">
    <subcellularLocation>
        <location evidence="1">Cytoplasm</location>
    </subcellularLocation>
</comment>
<comment type="similarity">
    <text evidence="1">Belongs to the class-I aminoacyl-tRNA synthetase family. Glutamate--tRNA ligase type 1 subfamily.</text>
</comment>